<accession>A3D6V2</accession>
<organism>
    <name type="scientific">Shewanella baltica (strain OS155 / ATCC BAA-1091)</name>
    <dbReference type="NCBI Taxonomy" id="325240"/>
    <lineage>
        <taxon>Bacteria</taxon>
        <taxon>Pseudomonadati</taxon>
        <taxon>Pseudomonadota</taxon>
        <taxon>Gammaproteobacteria</taxon>
        <taxon>Alteromonadales</taxon>
        <taxon>Shewanellaceae</taxon>
        <taxon>Shewanella</taxon>
    </lineage>
</organism>
<reference key="1">
    <citation type="submission" date="2007-02" db="EMBL/GenBank/DDBJ databases">
        <title>Complete sequence of chromosome of Shewanella baltica OS155.</title>
        <authorList>
            <consortium name="US DOE Joint Genome Institute"/>
            <person name="Copeland A."/>
            <person name="Lucas S."/>
            <person name="Lapidus A."/>
            <person name="Barry K."/>
            <person name="Detter J.C."/>
            <person name="Glavina del Rio T."/>
            <person name="Hammon N."/>
            <person name="Israni S."/>
            <person name="Dalin E."/>
            <person name="Tice H."/>
            <person name="Pitluck S."/>
            <person name="Sims D.R."/>
            <person name="Brettin T."/>
            <person name="Bruce D."/>
            <person name="Han C."/>
            <person name="Tapia R."/>
            <person name="Brainard J."/>
            <person name="Schmutz J."/>
            <person name="Larimer F."/>
            <person name="Land M."/>
            <person name="Hauser L."/>
            <person name="Kyrpides N."/>
            <person name="Mikhailova N."/>
            <person name="Brettar I."/>
            <person name="Klappenbach J."/>
            <person name="Konstantinidis K."/>
            <person name="Rodrigues J."/>
            <person name="Tiedje J."/>
            <person name="Richardson P."/>
        </authorList>
    </citation>
    <scope>NUCLEOTIDE SEQUENCE [LARGE SCALE GENOMIC DNA]</scope>
    <source>
        <strain>OS155 / ATCC BAA-1091</strain>
    </source>
</reference>
<protein>
    <recommendedName>
        <fullName evidence="1">GMP synthase [glutamine-hydrolyzing]</fullName>
        <ecNumber evidence="1">6.3.5.2</ecNumber>
    </recommendedName>
    <alternativeName>
        <fullName evidence="1">GMP synthetase</fullName>
    </alternativeName>
    <alternativeName>
        <fullName evidence="1">Glutamine amidotransferase</fullName>
    </alternativeName>
</protein>
<dbReference type="EC" id="6.3.5.2" evidence="1"/>
<dbReference type="EMBL" id="CP000563">
    <property type="protein sequence ID" value="ABN62465.1"/>
    <property type="molecule type" value="Genomic_DNA"/>
</dbReference>
<dbReference type="RefSeq" id="WP_006082475.1">
    <property type="nucleotide sequence ID" value="NC_009052.1"/>
</dbReference>
<dbReference type="SMR" id="A3D6V2"/>
<dbReference type="STRING" id="325240.Sbal_2983"/>
<dbReference type="GeneID" id="11773198"/>
<dbReference type="KEGG" id="sbl:Sbal_2983"/>
<dbReference type="HOGENOM" id="CLU_014340_0_5_6"/>
<dbReference type="OrthoDB" id="9802219at2"/>
<dbReference type="UniPathway" id="UPA00189">
    <property type="reaction ID" value="UER00296"/>
</dbReference>
<dbReference type="Proteomes" id="UP000001557">
    <property type="component" value="Chromosome"/>
</dbReference>
<dbReference type="GO" id="GO:0005829">
    <property type="term" value="C:cytosol"/>
    <property type="evidence" value="ECO:0007669"/>
    <property type="project" value="TreeGrafter"/>
</dbReference>
<dbReference type="GO" id="GO:0005524">
    <property type="term" value="F:ATP binding"/>
    <property type="evidence" value="ECO:0007669"/>
    <property type="project" value="UniProtKB-UniRule"/>
</dbReference>
<dbReference type="GO" id="GO:0003921">
    <property type="term" value="F:GMP synthase activity"/>
    <property type="evidence" value="ECO:0007669"/>
    <property type="project" value="InterPro"/>
</dbReference>
<dbReference type="CDD" id="cd01742">
    <property type="entry name" value="GATase1_GMP_Synthase"/>
    <property type="match status" value="1"/>
</dbReference>
<dbReference type="CDD" id="cd01997">
    <property type="entry name" value="GMP_synthase_C"/>
    <property type="match status" value="1"/>
</dbReference>
<dbReference type="FunFam" id="3.30.300.10:FF:000002">
    <property type="entry name" value="GMP synthase [glutamine-hydrolyzing]"/>
    <property type="match status" value="1"/>
</dbReference>
<dbReference type="FunFam" id="3.40.50.620:FF:000001">
    <property type="entry name" value="GMP synthase [glutamine-hydrolyzing]"/>
    <property type="match status" value="1"/>
</dbReference>
<dbReference type="FunFam" id="3.40.50.880:FF:000001">
    <property type="entry name" value="GMP synthase [glutamine-hydrolyzing]"/>
    <property type="match status" value="1"/>
</dbReference>
<dbReference type="Gene3D" id="3.30.300.10">
    <property type="match status" value="1"/>
</dbReference>
<dbReference type="Gene3D" id="3.40.50.880">
    <property type="match status" value="1"/>
</dbReference>
<dbReference type="Gene3D" id="3.40.50.620">
    <property type="entry name" value="HUPs"/>
    <property type="match status" value="1"/>
</dbReference>
<dbReference type="HAMAP" id="MF_00344">
    <property type="entry name" value="GMP_synthase"/>
    <property type="match status" value="1"/>
</dbReference>
<dbReference type="InterPro" id="IPR029062">
    <property type="entry name" value="Class_I_gatase-like"/>
</dbReference>
<dbReference type="InterPro" id="IPR017926">
    <property type="entry name" value="GATASE"/>
</dbReference>
<dbReference type="InterPro" id="IPR001674">
    <property type="entry name" value="GMP_synth_C"/>
</dbReference>
<dbReference type="InterPro" id="IPR004739">
    <property type="entry name" value="GMP_synth_GATase"/>
</dbReference>
<dbReference type="InterPro" id="IPR022955">
    <property type="entry name" value="GMP_synthase"/>
</dbReference>
<dbReference type="InterPro" id="IPR025777">
    <property type="entry name" value="GMPS_ATP_PPase_dom"/>
</dbReference>
<dbReference type="InterPro" id="IPR022310">
    <property type="entry name" value="NAD/GMP_synthase"/>
</dbReference>
<dbReference type="InterPro" id="IPR014729">
    <property type="entry name" value="Rossmann-like_a/b/a_fold"/>
</dbReference>
<dbReference type="NCBIfam" id="TIGR00884">
    <property type="entry name" value="guaA_Cterm"/>
    <property type="match status" value="1"/>
</dbReference>
<dbReference type="NCBIfam" id="TIGR00888">
    <property type="entry name" value="guaA_Nterm"/>
    <property type="match status" value="1"/>
</dbReference>
<dbReference type="NCBIfam" id="NF000848">
    <property type="entry name" value="PRK00074.1"/>
    <property type="match status" value="1"/>
</dbReference>
<dbReference type="PANTHER" id="PTHR11922:SF2">
    <property type="entry name" value="GMP SYNTHASE [GLUTAMINE-HYDROLYZING]"/>
    <property type="match status" value="1"/>
</dbReference>
<dbReference type="PANTHER" id="PTHR11922">
    <property type="entry name" value="GMP SYNTHASE-RELATED"/>
    <property type="match status" value="1"/>
</dbReference>
<dbReference type="Pfam" id="PF00117">
    <property type="entry name" value="GATase"/>
    <property type="match status" value="1"/>
</dbReference>
<dbReference type="Pfam" id="PF00958">
    <property type="entry name" value="GMP_synt_C"/>
    <property type="match status" value="1"/>
</dbReference>
<dbReference type="Pfam" id="PF02540">
    <property type="entry name" value="NAD_synthase"/>
    <property type="match status" value="1"/>
</dbReference>
<dbReference type="PRINTS" id="PR00097">
    <property type="entry name" value="ANTSNTHASEII"/>
</dbReference>
<dbReference type="PRINTS" id="PR00099">
    <property type="entry name" value="CPSGATASE"/>
</dbReference>
<dbReference type="PRINTS" id="PR00096">
    <property type="entry name" value="GATASE"/>
</dbReference>
<dbReference type="SUPFAM" id="SSF52402">
    <property type="entry name" value="Adenine nucleotide alpha hydrolases-like"/>
    <property type="match status" value="1"/>
</dbReference>
<dbReference type="SUPFAM" id="SSF52317">
    <property type="entry name" value="Class I glutamine amidotransferase-like"/>
    <property type="match status" value="1"/>
</dbReference>
<dbReference type="SUPFAM" id="SSF54810">
    <property type="entry name" value="GMP synthetase C-terminal dimerisation domain"/>
    <property type="match status" value="1"/>
</dbReference>
<dbReference type="PROSITE" id="PS51273">
    <property type="entry name" value="GATASE_TYPE_1"/>
    <property type="match status" value="1"/>
</dbReference>
<dbReference type="PROSITE" id="PS51553">
    <property type="entry name" value="GMPS_ATP_PPASE"/>
    <property type="match status" value="1"/>
</dbReference>
<proteinExistence type="inferred from homology"/>
<comment type="function">
    <text evidence="1">Catalyzes the synthesis of GMP from XMP.</text>
</comment>
<comment type="catalytic activity">
    <reaction evidence="1">
        <text>XMP + L-glutamine + ATP + H2O = GMP + L-glutamate + AMP + diphosphate + 2 H(+)</text>
        <dbReference type="Rhea" id="RHEA:11680"/>
        <dbReference type="ChEBI" id="CHEBI:15377"/>
        <dbReference type="ChEBI" id="CHEBI:15378"/>
        <dbReference type="ChEBI" id="CHEBI:29985"/>
        <dbReference type="ChEBI" id="CHEBI:30616"/>
        <dbReference type="ChEBI" id="CHEBI:33019"/>
        <dbReference type="ChEBI" id="CHEBI:57464"/>
        <dbReference type="ChEBI" id="CHEBI:58115"/>
        <dbReference type="ChEBI" id="CHEBI:58359"/>
        <dbReference type="ChEBI" id="CHEBI:456215"/>
        <dbReference type="EC" id="6.3.5.2"/>
    </reaction>
</comment>
<comment type="pathway">
    <text evidence="1">Purine metabolism; GMP biosynthesis; GMP from XMP (L-Gln route): step 1/1.</text>
</comment>
<comment type="subunit">
    <text evidence="1">Homodimer.</text>
</comment>
<feature type="chain" id="PRO_1000120398" description="GMP synthase [glutamine-hydrolyzing]">
    <location>
        <begin position="1"/>
        <end position="525"/>
    </location>
</feature>
<feature type="domain" description="Glutamine amidotransferase type-1" evidence="1">
    <location>
        <begin position="8"/>
        <end position="207"/>
    </location>
</feature>
<feature type="domain" description="GMPS ATP-PPase" evidence="1">
    <location>
        <begin position="208"/>
        <end position="400"/>
    </location>
</feature>
<feature type="active site" description="Nucleophile" evidence="1">
    <location>
        <position position="85"/>
    </location>
</feature>
<feature type="active site" evidence="1">
    <location>
        <position position="181"/>
    </location>
</feature>
<feature type="active site" evidence="1">
    <location>
        <position position="183"/>
    </location>
</feature>
<feature type="binding site" evidence="1">
    <location>
        <begin position="235"/>
        <end position="241"/>
    </location>
    <ligand>
        <name>ATP</name>
        <dbReference type="ChEBI" id="CHEBI:30616"/>
    </ligand>
</feature>
<sequence length="525" mass="58224">MSDIHEHKILILDFGSQYTQLIARRIREIGVYCELWAWDVTEAQIREFAPNGIILAGGPESVTAENSPRAPEYVFTAGVPVLGICYGMQTMSEQLGGKVIQGVGEGEFGYAQIEMLTDSLLFKGIEDAVNSEGKPLLDVWMSHGDKVSAIPEGFVAVAKTDTCPFAAMANEEKQFFGVQFHPEVTHTRQGMRMLSHFALDICGCAANWKPSSIIEDAIERLKKQIGDDEVILGLSGGVDSSVVAMLLHRAIGKKLTCVFVDNGLLRLNEAEQVMEMFGDHFGLNIIHVDAENRFLDAMKGEADPEAKRKIIGRVFVEIFDEESKKCANAKWLAQGTIYPDVIESAGSATGKAHVIKSHHNVGGLPDDMELGLVEPLRELFKDEVRKIGLELGLPYNMLYRHPFPGPGLGVRVLGEVKKEYCDLLRRADAIFIEELHKADLYNKVSQAFTVFLPVRSVGVMGDGRKYDWVVSLRAVETVDFMTAHWAHLPYDFLGRVSNRIINEVDGISRVVYDISGKPPATIEWE</sequence>
<keyword id="KW-0067">ATP-binding</keyword>
<keyword id="KW-0315">Glutamine amidotransferase</keyword>
<keyword id="KW-0332">GMP biosynthesis</keyword>
<keyword id="KW-0436">Ligase</keyword>
<keyword id="KW-0547">Nucleotide-binding</keyword>
<keyword id="KW-0658">Purine biosynthesis</keyword>
<keyword id="KW-1185">Reference proteome</keyword>
<evidence type="ECO:0000255" key="1">
    <source>
        <dbReference type="HAMAP-Rule" id="MF_00344"/>
    </source>
</evidence>
<name>GUAA_SHEB5</name>
<gene>
    <name evidence="1" type="primary">guaA</name>
    <name type="ordered locus">Sbal_2983</name>
</gene>